<protein>
    <recommendedName>
        <fullName evidence="6">RxLR effector protein 17</fullName>
    </recommendedName>
</protein>
<evidence type="ECO:0000255" key="1"/>
<evidence type="ECO:0000255" key="2">
    <source>
        <dbReference type="PROSITE-ProRule" id="PRU00498"/>
    </source>
</evidence>
<evidence type="ECO:0000269" key="3">
    <source>
    </source>
</evidence>
<evidence type="ECO:0000269" key="4">
    <source>
    </source>
</evidence>
<evidence type="ECO:0000269" key="5">
    <source>
    </source>
</evidence>
<evidence type="ECO:0000303" key="6">
    <source>
    </source>
</evidence>
<evidence type="ECO:0000305" key="7"/>
<evidence type="ECO:0000305" key="8">
    <source>
    </source>
</evidence>
<evidence type="ECO:0000305" key="9">
    <source>
    </source>
</evidence>
<proteinExistence type="evidence at protein level"/>
<keyword id="KW-0325">Glycoprotein</keyword>
<keyword id="KW-1032">Host cell membrane</keyword>
<keyword id="KW-1043">Host membrane</keyword>
<keyword id="KW-0472">Membrane</keyword>
<keyword id="KW-1185">Reference proteome</keyword>
<keyword id="KW-0964">Secreted</keyword>
<keyword id="KW-0732">Signal</keyword>
<keyword id="KW-0843">Virulence</keyword>
<organism>
    <name type="scientific">Hyaloperonospora arabidopsidis (strain Emoy2)</name>
    <name type="common">Downy mildew agent</name>
    <name type="synonym">Peronospora arabidopsidis</name>
    <dbReference type="NCBI Taxonomy" id="559515"/>
    <lineage>
        <taxon>Eukaryota</taxon>
        <taxon>Sar</taxon>
        <taxon>Stramenopiles</taxon>
        <taxon>Oomycota</taxon>
        <taxon>Peronosporales</taxon>
        <taxon>Peronosporaceae</taxon>
        <taxon>Hyaloperonospora</taxon>
    </lineage>
</organism>
<comment type="function">
    <text evidence="3 4">Secreted effector that confers enhanced plant susceptibility during both compatible and incompatible interactions between the pathogen and its host (PubMed:21914011, PubMed:22072967). Promotes the sexual reproduction of the pathogen in the plant host (PubMed:21914011).</text>
</comment>
<comment type="subunit">
    <text evidence="5">Interacts with host A.thaliana At1G14340.</text>
</comment>
<comment type="subcellular location">
    <subcellularLocation>
        <location evidence="3 5">Secreted</location>
    </subcellularLocation>
    <subcellularLocation>
        <location evidence="3 5">Host cell membrane</location>
    </subcellularLocation>
    <text evidence="3 5">Localizes to the membrane around haustoria also called extrahaustorial membrane (EHM) at early and late stages of infection.</text>
</comment>
<comment type="domain">
    <text evidence="8">The RxLR-dEER motif is required for the delivery of the effector to the host cell cytoplasm but does not bind phosphatidylinositol monophosphates.</text>
</comment>
<comment type="domain">
    <text evidence="9">The C-terminal region (residues 247 to 269) consists of one W motif, a conserved motif found in already well characterized effectors that may be involved in the interaction with host proteins.</text>
</comment>
<comment type="similarity">
    <text evidence="7">Belongs to the RxLR effector family.</text>
</comment>
<name>RXL17_HYAAE</name>
<feature type="signal peptide" evidence="1">
    <location>
        <begin position="1"/>
        <end position="24"/>
    </location>
</feature>
<feature type="chain" id="PRO_5004049285" description="RxLR effector protein 17">
    <location>
        <begin position="25"/>
        <end position="305"/>
    </location>
</feature>
<feature type="region of interest" description="W motif" evidence="9">
    <location>
        <begin position="247"/>
        <end position="269"/>
    </location>
</feature>
<feature type="short sequence motif" description="RxLR-dEER" evidence="8">
    <location>
        <begin position="45"/>
        <end position="60"/>
    </location>
</feature>
<feature type="glycosylation site" description="N-linked (GlcNAc...) asparagine" evidence="2">
    <location>
        <position position="207"/>
    </location>
</feature>
<feature type="glycosylation site" description="N-linked (GlcNAc...) asparagine" evidence="2">
    <location>
        <position position="227"/>
    </location>
</feature>
<dbReference type="EMBL" id="HE574733">
    <property type="protein sequence ID" value="CCC55811.1"/>
    <property type="molecule type" value="mRNA"/>
</dbReference>
<dbReference type="EMBL" id="JH598420">
    <property type="status" value="NOT_ANNOTATED_CDS"/>
    <property type="molecule type" value="Genomic_DNA"/>
</dbReference>
<dbReference type="GlyCosmos" id="M4BMH6">
    <property type="glycosylation" value="2 sites, No reported glycans"/>
</dbReference>
<dbReference type="EnsemblProtists" id="HpaT807613">
    <property type="protein sequence ID" value="HpaP807613"/>
    <property type="gene ID" value="HpaG807613"/>
</dbReference>
<dbReference type="VEuPathDB" id="FungiDB:HpaG807613"/>
<dbReference type="HOGENOM" id="CLU_913523_0_0_1"/>
<dbReference type="InParanoid" id="M4BMH6"/>
<dbReference type="PHI-base" id="PHI:4847"/>
<dbReference type="PHI-base" id="PHI:4852"/>
<dbReference type="Proteomes" id="UP000011713">
    <property type="component" value="Unassembled WGS sequence"/>
</dbReference>
<dbReference type="GO" id="GO:0005576">
    <property type="term" value="C:extracellular region"/>
    <property type="evidence" value="ECO:0007669"/>
    <property type="project" value="UniProtKB-SubCell"/>
</dbReference>
<dbReference type="GO" id="GO:0020002">
    <property type="term" value="C:host cell plasma membrane"/>
    <property type="evidence" value="ECO:0007669"/>
    <property type="project" value="UniProtKB-SubCell"/>
</dbReference>
<dbReference type="GO" id="GO:0016020">
    <property type="term" value="C:membrane"/>
    <property type="evidence" value="ECO:0007669"/>
    <property type="project" value="UniProtKB-KW"/>
</dbReference>
<reference key="1">
    <citation type="journal article" date="2011" name="PLoS Pathog.">
        <title>Multiple candidate effectors from the oomycete pathogen Hyaloperonospora arabidopsidis suppress host plant immunity.</title>
        <authorList>
            <person name="Fabro G."/>
            <person name="Steinbrenner J."/>
            <person name="Coates M."/>
            <person name="Ishaque N."/>
            <person name="Baxter L."/>
            <person name="Studholme D.J."/>
            <person name="Koerner E."/>
            <person name="Allen R.L."/>
            <person name="Piquerez S.J."/>
            <person name="Rougon-Cardoso A."/>
            <person name="Greenshields D."/>
            <person name="Lei R."/>
            <person name="Badel J.L."/>
            <person name="Caillaud M.C."/>
            <person name="Sohn K.H."/>
            <person name="Van den Ackerveken G."/>
            <person name="Parker J.E."/>
            <person name="Beynon J."/>
            <person name="Jones J.D."/>
        </authorList>
    </citation>
    <scope>NUCLEOTIDE SEQUENCE [MRNA] OF 25-305</scope>
    <scope>FUNCTION</scope>
    <source>
        <strain>Emoy2</strain>
    </source>
</reference>
<reference key="2">
    <citation type="journal article" date="2010" name="Science">
        <title>Signatures of adaptation to obligate biotrophy in the Hyaloperonospora arabidopsidis genome.</title>
        <authorList>
            <person name="Baxter L."/>
            <person name="Tripathy S."/>
            <person name="Ishaque N."/>
            <person name="Boot N."/>
            <person name="Cabral A."/>
            <person name="Kemen E."/>
            <person name="Thines M."/>
            <person name="Ah-Fong A."/>
            <person name="Anderson R."/>
            <person name="Badejoko W."/>
            <person name="Bittner-Eddy P."/>
            <person name="Boore J.L."/>
            <person name="Chibucos M.C."/>
            <person name="Coates M."/>
            <person name="Dehal P."/>
            <person name="Delehaunty K."/>
            <person name="Dong S."/>
            <person name="Downton P."/>
            <person name="Dumas B."/>
            <person name="Fabro G."/>
            <person name="Fronick C."/>
            <person name="Fuerstenberg S.I."/>
            <person name="Fulton L."/>
            <person name="Gaulin E."/>
            <person name="Govers F."/>
            <person name="Hughes L."/>
            <person name="Humphray S."/>
            <person name="Jiang R.H."/>
            <person name="Judelson H."/>
            <person name="Kamoun S."/>
            <person name="Kyung K."/>
            <person name="Meijer H."/>
            <person name="Minx P."/>
            <person name="Morris P."/>
            <person name="Nelson J."/>
            <person name="Phuntumart V."/>
            <person name="Qutob D."/>
            <person name="Rehmany A."/>
            <person name="Rougon-Cardoso A."/>
            <person name="Ryden P."/>
            <person name="Torto-Alalibo T."/>
            <person name="Studholme D."/>
            <person name="Wang Y."/>
            <person name="Win J."/>
            <person name="Wood J."/>
            <person name="Clifton S.W."/>
            <person name="Rogers J."/>
            <person name="Van den Ackerveken G."/>
            <person name="Jones J.D."/>
            <person name="McDowell J.M."/>
            <person name="Beynon J."/>
            <person name="Tyler B.M."/>
        </authorList>
    </citation>
    <scope>NUCLEOTIDE SEQUENCE [LARGE SCALE GENOMIC DNA]</scope>
    <source>
        <strain>Emoy2</strain>
    </source>
</reference>
<reference key="3">
    <citation type="submission" date="2015-06" db="UniProtKB">
        <authorList>
            <consortium name="EnsemblProtists"/>
        </authorList>
    </citation>
    <scope>IDENTIFICATION</scope>
    <source>
        <strain>Emoy2</strain>
    </source>
</reference>
<reference key="4">
    <citation type="journal article" date="2011" name="Science">
        <title>Independently evolved virulence effectors converge onto hubs in a plant immune system network.</title>
        <authorList>
            <consortium name="European Union Effectoromics Consortium"/>
            <person name="Mukhtar M.S."/>
            <person name="Carvunis A.-R."/>
            <person name="Dreze M."/>
            <person name="Epple P."/>
            <person name="Steinbrenner J."/>
            <person name="Moore J."/>
            <person name="Tasan M."/>
            <person name="Galli M."/>
            <person name="Hao T."/>
            <person name="Nishimura M.T."/>
            <person name="Pevzner S.J."/>
            <person name="Donovan S.E."/>
            <person name="Ghamsari L."/>
            <person name="Santhanam B."/>
            <person name="Romero V."/>
            <person name="Poulin M.M."/>
            <person name="Gebreab F."/>
            <person name="Gutierrez B.J."/>
            <person name="Tam S."/>
            <person name="Monachello D."/>
            <person name="Boxem M."/>
            <person name="Harbort C.J."/>
            <person name="McDonald N."/>
            <person name="Gai L."/>
            <person name="Chen H."/>
            <person name="He Y."/>
            <person name="Vandenhaute J."/>
            <person name="Roth F.P."/>
            <person name="Hill D.E."/>
            <person name="Ecker J.R."/>
            <person name="Vidal M."/>
            <person name="Beynon J."/>
            <person name="Braun P."/>
            <person name="Dangl J.L."/>
        </authorList>
    </citation>
    <scope>INTERACTION WITH HOST AT1G14340</scope>
</reference>
<reference key="5">
    <citation type="journal article" date="2012" name="Plant J.">
        <title>Subcellular localization of the Hpa RxLR effector repertoire identifies a tonoplast-associated protein HaRxL17 that confers enhanced plant susceptibility.</title>
        <authorList>
            <person name="Caillaud M.C."/>
            <person name="Piquerez S.J."/>
            <person name="Fabro G."/>
            <person name="Steinbrenner J."/>
            <person name="Ishaque N."/>
            <person name="Beynon J."/>
            <person name="Jones J.D."/>
        </authorList>
    </citation>
    <scope>FUNCTION</scope>
    <scope>SUBCELLULAR LOCATION</scope>
</reference>
<reference key="6">
    <citation type="journal article" date="2012" name="Plant Signal. Behav.">
        <title>Characterization of the membrane-associated HaRxL17 Hpa effector candidate.</title>
        <authorList>
            <person name="Caillaud M.C."/>
            <person name="Piquerez S.J."/>
            <person name="Jones J.D."/>
        </authorList>
    </citation>
    <scope>SUBCELLULAR LOCATION</scope>
    <scope>FUNCTION</scope>
    <scope>DOMAIN</scope>
</reference>
<sequence length="305" mass="33946">MQSILWFALIASVVFLVLVDLASGLNGLETLSSGADVDELTTATRLLRAAHLDRKLSEERAFISGESIGSWWTKVTEWLRVKFELIIAYIKQLRVKSNDVKDDAATNDAAHAKDDAAANKAARAKDDASRATYEAARANYEAARAYDDATRAQDVAALEAARAIEATDIAAYTGANAEYEQSMFLNGFVKTIDLHNEKNAPIMTRLNKSLDEAKKSSTFREIADGVNESKVALVVHEKQDGYLLWILHLKWAVEAKSPKDVVERILKDLGTHDVPHLQERAEQVKKAYTIFLLYVERMSRATHPK</sequence>
<accession>M4BMH6</accession>
<accession>G3C9N5</accession>
<gene>
    <name evidence="6" type="primary">RxL17</name>
</gene>